<feature type="chain" id="PRO_0000050518" description="Non-selective voltage-gated ion channel VDAC2">
    <location>
        <begin position="1"/>
        <end position="282"/>
    </location>
</feature>
<feature type="transmembrane region" description="Beta stranded" evidence="1">
    <location>
        <begin position="25"/>
        <end position="34"/>
    </location>
</feature>
<feature type="transmembrane region" description="Beta stranded" evidence="1">
    <location>
        <begin position="38"/>
        <end position="46"/>
    </location>
</feature>
<feature type="transmembrane region" description="Beta stranded" evidence="1">
    <location>
        <begin position="53"/>
        <end position="63"/>
    </location>
</feature>
<feature type="transmembrane region" description="Beta stranded" evidence="1">
    <location>
        <begin position="68"/>
        <end position="75"/>
    </location>
</feature>
<feature type="transmembrane region" description="Beta stranded" evidence="1">
    <location>
        <begin position="79"/>
        <end position="88"/>
    </location>
</feature>
<feature type="transmembrane region" description="Beta stranded" evidence="1">
    <location>
        <begin position="94"/>
        <end position="103"/>
    </location>
</feature>
<feature type="transmembrane region" description="Beta stranded" evidence="1">
    <location>
        <begin position="110"/>
        <end position="119"/>
    </location>
</feature>
<feature type="transmembrane region" description="Beta stranded" evidence="1">
    <location>
        <begin position="122"/>
        <end position="129"/>
    </location>
</feature>
<feature type="transmembrane region" description="Beta stranded" evidence="1">
    <location>
        <begin position="136"/>
        <end position="144"/>
    </location>
</feature>
<feature type="transmembrane region" description="Beta stranded" evidence="1">
    <location>
        <begin position="149"/>
        <end position="157"/>
    </location>
</feature>
<feature type="transmembrane region" description="Beta stranded" evidence="1">
    <location>
        <begin position="162"/>
        <end position="174"/>
    </location>
</feature>
<feature type="transmembrane region" description="Beta stranded" evidence="1">
    <location>
        <begin position="177"/>
        <end position="184"/>
    </location>
</feature>
<feature type="transmembrane region" description="Beta stranded" evidence="1">
    <location>
        <begin position="188"/>
        <end position="197"/>
    </location>
</feature>
<feature type="transmembrane region" description="Beta stranded" evidence="1">
    <location>
        <begin position="201"/>
        <end position="210"/>
    </location>
</feature>
<feature type="transmembrane region" description="Beta stranded" evidence="1">
    <location>
        <begin position="217"/>
        <end position="226"/>
    </location>
</feature>
<feature type="transmembrane region" description="Beta stranded" evidence="1">
    <location>
        <begin position="230"/>
        <end position="237"/>
    </location>
</feature>
<feature type="transmembrane region" description="Beta stranded" evidence="1">
    <location>
        <begin position="241"/>
        <end position="250"/>
    </location>
</feature>
<feature type="transmembrane region" description="Beta stranded" evidence="1">
    <location>
        <begin position="253"/>
        <end position="262"/>
    </location>
</feature>
<feature type="transmembrane region" description="Beta stranded" evidence="1">
    <location>
        <begin position="272"/>
        <end position="281"/>
    </location>
</feature>
<feature type="binding site" evidence="1">
    <location>
        <begin position="241"/>
        <end position="243"/>
    </location>
    <ligand>
        <name>NAD(+)</name>
        <dbReference type="ChEBI" id="CHEBI:57540"/>
    </ligand>
</feature>
<feature type="binding site" evidence="1">
    <location>
        <begin position="259"/>
        <end position="263"/>
    </location>
    <ligand>
        <name>NAD(+)</name>
        <dbReference type="ChEBI" id="CHEBI:57540"/>
    </ligand>
</feature>
<feature type="site" description="Involved in hexokinase binding" evidence="1">
    <location>
        <position position="72"/>
    </location>
</feature>
<feature type="modified residue" description="N-acetylalanine" evidence="6">
    <location>
        <position position="1"/>
    </location>
</feature>
<keyword id="KW-0007">Acetylation</keyword>
<keyword id="KW-0903">Direct protein sequencing</keyword>
<keyword id="KW-0406">Ion transport</keyword>
<keyword id="KW-0472">Membrane</keyword>
<keyword id="KW-0496">Mitochondrion</keyword>
<keyword id="KW-1000">Mitochondrion outer membrane</keyword>
<keyword id="KW-0520">NAD</keyword>
<keyword id="KW-0547">Nucleotide-binding</keyword>
<keyword id="KW-0626">Porin</keyword>
<keyword id="KW-1185">Reference proteome</keyword>
<keyword id="KW-0812">Transmembrane</keyword>
<keyword id="KW-1134">Transmembrane beta strand</keyword>
<keyword id="KW-0813">Transport</keyword>
<reference key="1">
    <citation type="journal article" date="1999" name="Anal. Biochem.">
        <title>Purification procedure and monoclonal antibodies: two instruments for research on vertebrate porins.</title>
        <authorList>
            <person name="Reymann S."/>
            <person name="Kiafard Z."/>
            <person name="Rohm B."/>
            <person name="Strutz N."/>
            <person name="Hesse D."/>
            <person name="Kratzin H.D."/>
            <person name="Zimmermann B."/>
            <person name="Thinnes F.P."/>
            <person name="Hilschmann N."/>
        </authorList>
    </citation>
    <scope>PROTEIN SEQUENCE</scope>
    <source>
        <tissue evidence="7">Skeletal muscle</tissue>
    </source>
</reference>
<reference key="2">
    <citation type="journal article" date="2000" name="Int. J. Biochem. Cell Biol.">
        <title>The plasma membrane of Xenopus laevis oocytes contains voltage-dependent anion-selective porin channels.</title>
        <authorList>
            <person name="Steinacker P."/>
            <person name="Awni L.A."/>
            <person name="Becker S."/>
            <person name="Cole T."/>
            <person name="Reymann S."/>
            <person name="Hesse D."/>
            <person name="Kratzin H.D."/>
            <person name="Morris-Wortmann C."/>
            <person name="Schwarzer C."/>
            <person name="Thinnes F.P."/>
            <person name="Hilschmann N."/>
        </authorList>
    </citation>
    <scope>PROTEIN SEQUENCE OF 84-90 AND 274-282</scope>
    <scope>ACETYLATION AT ALA-1</scope>
    <scope>TISSUE SPECIFICITY</scope>
    <source>
        <tissue>Oocyte</tissue>
    </source>
</reference>
<evidence type="ECO:0000250" key="1"/>
<evidence type="ECO:0000250" key="2">
    <source>
        <dbReference type="UniProtKB" id="P21796"/>
    </source>
</evidence>
<evidence type="ECO:0000250" key="3">
    <source>
        <dbReference type="UniProtKB" id="P45880"/>
    </source>
</evidence>
<evidence type="ECO:0000250" key="4">
    <source>
        <dbReference type="UniProtKB" id="Q60930"/>
    </source>
</evidence>
<evidence type="ECO:0000250" key="5">
    <source>
        <dbReference type="UniProtKB" id="Q9Y5I6"/>
    </source>
</evidence>
<evidence type="ECO:0000269" key="6">
    <source>
    </source>
</evidence>
<evidence type="ECO:0000303" key="7">
    <source>
    </source>
</evidence>
<evidence type="ECO:0000305" key="8"/>
<accession>P81004</accession>
<organism>
    <name type="scientific">Xenopus laevis</name>
    <name type="common">African clawed frog</name>
    <dbReference type="NCBI Taxonomy" id="8355"/>
    <lineage>
        <taxon>Eukaryota</taxon>
        <taxon>Metazoa</taxon>
        <taxon>Chordata</taxon>
        <taxon>Craniata</taxon>
        <taxon>Vertebrata</taxon>
        <taxon>Euteleostomi</taxon>
        <taxon>Amphibia</taxon>
        <taxon>Batrachia</taxon>
        <taxon>Anura</taxon>
        <taxon>Pipoidea</taxon>
        <taxon>Pipidae</taxon>
        <taxon>Xenopodinae</taxon>
        <taxon>Xenopus</taxon>
        <taxon>Xenopus</taxon>
    </lineage>
</organism>
<dbReference type="SMR" id="P81004"/>
<dbReference type="iPTMnet" id="P81004"/>
<dbReference type="CD-CODE" id="78E86D56">
    <property type="entry name" value="Mitochondrial cloud"/>
</dbReference>
<dbReference type="Proteomes" id="UP000186698">
    <property type="component" value="Unplaced"/>
</dbReference>
<dbReference type="GO" id="GO:0005741">
    <property type="term" value="C:mitochondrial outer membrane"/>
    <property type="evidence" value="ECO:0000318"/>
    <property type="project" value="GO_Central"/>
</dbReference>
<dbReference type="GO" id="GO:0046930">
    <property type="term" value="C:pore complex"/>
    <property type="evidence" value="ECO:0007669"/>
    <property type="project" value="UniProtKB-KW"/>
</dbReference>
<dbReference type="GO" id="GO:0000166">
    <property type="term" value="F:nucleotide binding"/>
    <property type="evidence" value="ECO:0007669"/>
    <property type="project" value="UniProtKB-KW"/>
</dbReference>
<dbReference type="GO" id="GO:0015288">
    <property type="term" value="F:porin activity"/>
    <property type="evidence" value="ECO:0007669"/>
    <property type="project" value="UniProtKB-KW"/>
</dbReference>
<dbReference type="GO" id="GO:0008308">
    <property type="term" value="F:voltage-gated monoatomic anion channel activity"/>
    <property type="evidence" value="ECO:0000318"/>
    <property type="project" value="GO_Central"/>
</dbReference>
<dbReference type="GO" id="GO:0005244">
    <property type="term" value="F:voltage-gated monoatomic ion channel activity"/>
    <property type="evidence" value="ECO:0000250"/>
    <property type="project" value="UniProtKB"/>
</dbReference>
<dbReference type="GO" id="GO:0006820">
    <property type="term" value="P:monoatomic anion transport"/>
    <property type="evidence" value="ECO:0000250"/>
    <property type="project" value="UniProtKB"/>
</dbReference>
<dbReference type="CDD" id="cd07306">
    <property type="entry name" value="Porin3_VDAC"/>
    <property type="match status" value="1"/>
</dbReference>
<dbReference type="FunFam" id="2.40.160.10:FF:000001">
    <property type="entry name" value="Voltage-dependent anion-selective channel protein 2"/>
    <property type="match status" value="1"/>
</dbReference>
<dbReference type="Gene3D" id="2.40.160.10">
    <property type="entry name" value="Porin"/>
    <property type="match status" value="1"/>
</dbReference>
<dbReference type="InterPro" id="IPR023614">
    <property type="entry name" value="Porin_dom_sf"/>
</dbReference>
<dbReference type="InterPro" id="IPR001925">
    <property type="entry name" value="Porin_Euk"/>
</dbReference>
<dbReference type="InterPro" id="IPR027246">
    <property type="entry name" value="Porin_Euk/Tom40"/>
</dbReference>
<dbReference type="PANTHER" id="PTHR11743">
    <property type="entry name" value="VOLTAGE-DEPENDENT ANION-SELECTIVE CHANNEL"/>
    <property type="match status" value="1"/>
</dbReference>
<dbReference type="PANTHER" id="PTHR11743:SF12">
    <property type="entry name" value="VOLTAGE-DEPENDENT ANION-SELECTIVE CHANNEL PROTEIN 2"/>
    <property type="match status" value="1"/>
</dbReference>
<dbReference type="Pfam" id="PF01459">
    <property type="entry name" value="Porin_3"/>
    <property type="match status" value="1"/>
</dbReference>
<dbReference type="PRINTS" id="PR00185">
    <property type="entry name" value="EUKARYTPORIN"/>
</dbReference>
<dbReference type="PROSITE" id="PS00558">
    <property type="entry name" value="EUKARYOTIC_PORIN"/>
    <property type="match status" value="1"/>
</dbReference>
<comment type="function">
    <text evidence="3 4">Non-selective voltage-gated ion channel that mediates the transport of anions and cations through the mitochondrion outer membrane and plasma membrane (By similarity). The channel adopts an open conformation at zero mV and a closed conformation at both positive and negative potentials (By similarity). There are two populations of channels; the main that functions in a lower open-state conductance with lower ion selectivity, that switch, in a voltage-dependent manner, from the open to a low-conducting 'closed' state and the other that has a normal ion selectivity in the typical high conductance, 'open' state (By similarity).</text>
</comment>
<comment type="function">
    <text evidence="3">Catalyzes the scrambling of phospholipids across the outer mitochondrial membrane; the mechanism is unrelated to channel activity and is capable of translocating both anionic and zwitterionic phospholipids.</text>
</comment>
<comment type="catalytic activity">
    <reaction evidence="4">
        <text>chloride(in) = chloride(out)</text>
        <dbReference type="Rhea" id="RHEA:29823"/>
        <dbReference type="ChEBI" id="CHEBI:17996"/>
    </reaction>
</comment>
<comment type="catalytic activity">
    <reaction evidence="4">
        <text>K(+)(in) = K(+)(out)</text>
        <dbReference type="Rhea" id="RHEA:29463"/>
        <dbReference type="ChEBI" id="CHEBI:29103"/>
    </reaction>
</comment>
<comment type="catalytic activity">
    <reaction evidence="3">
        <text>a 1,2-diacyl-sn-glycero-3-phospho-L-serine(in) = a 1,2-diacyl-sn-glycero-3-phospho-L-serine(out)</text>
        <dbReference type="Rhea" id="RHEA:38663"/>
        <dbReference type="ChEBI" id="CHEBI:57262"/>
    </reaction>
</comment>
<comment type="catalytic activity">
    <reaction evidence="3">
        <text>a 1,2-diacyl-sn-glycero-3-phosphocholine(in) = a 1,2-diacyl-sn-glycero-3-phosphocholine(out)</text>
        <dbReference type="Rhea" id="RHEA:38571"/>
        <dbReference type="ChEBI" id="CHEBI:57643"/>
    </reaction>
</comment>
<comment type="catalytic activity">
    <reaction evidence="3">
        <text>a 1,2-diacyl-sn-glycero-3-phospho-(1D-myo-inositol)(in) = a 1,2-diacyl-sn-glycero-3-phospho-(1D-myo-inositol)(out)</text>
        <dbReference type="Rhea" id="RHEA:38691"/>
        <dbReference type="ChEBI" id="CHEBI:57880"/>
    </reaction>
</comment>
<comment type="subunit">
    <text evidence="3">Monomer, homodimer and higher order oligomers; formation of higher order structures is necessary for scramblase activity (By similarity).</text>
</comment>
<comment type="subcellular location">
    <subcellularLocation>
        <location evidence="4">Mitochondrion outer membrane</location>
    </subcellularLocation>
    <subcellularLocation>
        <location evidence="3">Membrane</location>
    </subcellularLocation>
</comment>
<comment type="tissue specificity">
    <text evidence="6">Expressed in skeletal muscle and oocytes.</text>
</comment>
<comment type="domain">
    <text evidence="2">Consists mainly of a membrane-spanning beta-barrel formed by 19 beta-strands.</text>
</comment>
<comment type="similarity">
    <text evidence="8">Belongs to the eukaryotic mitochondrial porin family.</text>
</comment>
<sequence length="282" mass="30071">AVPPSYADLGKSARDIFNKGYGFGLVKLDVKTKSATGVEFTTSGTSNTDSGKVNGSLETKYKWGEYGLTFTEKWNTDNTLGTEIAIEDQIAKGLKLTFDTTFSPNTGKKSGKVKAAYKQEYVNLGCDVDFDFAGPAIHGSAVVGYEGWLAGYQMTFDSAKSKLTKNNFAVGYKTGDFQLHTNVNDGSEFAGSIYQKVSDKMETAVNLAWTSGNNSTRFGIAAKYQLDSHAAISAKVNNSSLVGVGYTQTLRPGVKLTLSALVDGKNINAGGHKLGLGLELEA</sequence>
<protein>
    <recommendedName>
        <fullName evidence="5">Non-selective voltage-gated ion channel VDAC2</fullName>
        <shortName>VDAC-2</shortName>
    </recommendedName>
    <alternativeName>
        <fullName>Outer mitochondrial membrane protein porin</fullName>
    </alternativeName>
</protein>
<name>VDAC2_XENLA</name>
<proteinExistence type="evidence at protein level"/>
<gene>
    <name evidence="5" type="primary">vdac2</name>
</gene>